<evidence type="ECO:0000255" key="1">
    <source>
        <dbReference type="HAMAP-Rule" id="MF_00281"/>
    </source>
</evidence>
<accession>B1IPL3</accession>
<protein>
    <recommendedName>
        <fullName evidence="1">Phenylalanine--tRNA ligase alpha subunit</fullName>
        <ecNumber evidence="1">6.1.1.20</ecNumber>
    </recommendedName>
    <alternativeName>
        <fullName evidence="1">Phenylalanyl-tRNA synthetase alpha subunit</fullName>
        <shortName evidence="1">PheRS</shortName>
    </alternativeName>
</protein>
<proteinExistence type="inferred from homology"/>
<sequence>MSHLAELVASAKAAISQASDVAALDNVRVEYLGKKGHLTLQMTTLRELPPEERPAAGAVINEAKEQVQQALNARKAELESAALNARLAAETIDVSLPGRRIENGGLHPVTRTIDRIESFFGELGFTVATGPEIEDDYHNFDALNIPGHHPARADHDTFWFDTTRLLRTQTSGVQIRTMKAQQPPIRIIAPGRVYRNDYDQTHTPMFHQMEGLIVDTNISFTNLKGTLHDFLRNFFEEDLQIRFRPSYFPFTEPSAEVDVMGKNGKWLEVLGCGMVHPNVLRNVGIDPEVYSGFAFGMGMERLTMLRYGVTDLRSFFENDLRFLKQFK</sequence>
<dbReference type="EC" id="6.1.1.20" evidence="1"/>
<dbReference type="EMBL" id="CP000946">
    <property type="protein sequence ID" value="ACA77563.1"/>
    <property type="molecule type" value="Genomic_DNA"/>
</dbReference>
<dbReference type="RefSeq" id="WP_000018596.1">
    <property type="nucleotide sequence ID" value="NZ_MTFT01000006.1"/>
</dbReference>
<dbReference type="SMR" id="B1IPL3"/>
<dbReference type="GeneID" id="75205640"/>
<dbReference type="KEGG" id="ecl:EcolC_1917"/>
<dbReference type="HOGENOM" id="CLU_025086_0_1_6"/>
<dbReference type="GO" id="GO:0005737">
    <property type="term" value="C:cytoplasm"/>
    <property type="evidence" value="ECO:0007669"/>
    <property type="project" value="UniProtKB-SubCell"/>
</dbReference>
<dbReference type="GO" id="GO:0005524">
    <property type="term" value="F:ATP binding"/>
    <property type="evidence" value="ECO:0007669"/>
    <property type="project" value="UniProtKB-UniRule"/>
</dbReference>
<dbReference type="GO" id="GO:0000287">
    <property type="term" value="F:magnesium ion binding"/>
    <property type="evidence" value="ECO:0007669"/>
    <property type="project" value="UniProtKB-UniRule"/>
</dbReference>
<dbReference type="GO" id="GO:0004826">
    <property type="term" value="F:phenylalanine-tRNA ligase activity"/>
    <property type="evidence" value="ECO:0007669"/>
    <property type="project" value="UniProtKB-UniRule"/>
</dbReference>
<dbReference type="GO" id="GO:0000049">
    <property type="term" value="F:tRNA binding"/>
    <property type="evidence" value="ECO:0007669"/>
    <property type="project" value="InterPro"/>
</dbReference>
<dbReference type="GO" id="GO:0006432">
    <property type="term" value="P:phenylalanyl-tRNA aminoacylation"/>
    <property type="evidence" value="ECO:0007669"/>
    <property type="project" value="UniProtKB-UniRule"/>
</dbReference>
<dbReference type="CDD" id="cd00496">
    <property type="entry name" value="PheRS_alpha_core"/>
    <property type="match status" value="1"/>
</dbReference>
<dbReference type="FunFam" id="3.30.930.10:FF:000003">
    <property type="entry name" value="Phenylalanine--tRNA ligase alpha subunit"/>
    <property type="match status" value="1"/>
</dbReference>
<dbReference type="Gene3D" id="3.30.930.10">
    <property type="entry name" value="Bira Bifunctional Protein, Domain 2"/>
    <property type="match status" value="1"/>
</dbReference>
<dbReference type="HAMAP" id="MF_00281">
    <property type="entry name" value="Phe_tRNA_synth_alpha1"/>
    <property type="match status" value="1"/>
</dbReference>
<dbReference type="InterPro" id="IPR006195">
    <property type="entry name" value="aa-tRNA-synth_II"/>
</dbReference>
<dbReference type="InterPro" id="IPR045864">
    <property type="entry name" value="aa-tRNA-synth_II/BPL/LPL"/>
</dbReference>
<dbReference type="InterPro" id="IPR004529">
    <property type="entry name" value="Phe-tRNA-synth_IIc_asu"/>
</dbReference>
<dbReference type="InterPro" id="IPR004188">
    <property type="entry name" value="Phe-tRNA_ligase_II_N"/>
</dbReference>
<dbReference type="InterPro" id="IPR022911">
    <property type="entry name" value="Phe_tRNA_ligase_alpha1_bac"/>
</dbReference>
<dbReference type="InterPro" id="IPR002319">
    <property type="entry name" value="Phenylalanyl-tRNA_Synthase"/>
</dbReference>
<dbReference type="InterPro" id="IPR010978">
    <property type="entry name" value="tRNA-bd_arm"/>
</dbReference>
<dbReference type="NCBIfam" id="TIGR00468">
    <property type="entry name" value="pheS"/>
    <property type="match status" value="1"/>
</dbReference>
<dbReference type="PANTHER" id="PTHR11538:SF41">
    <property type="entry name" value="PHENYLALANINE--TRNA LIGASE, MITOCHONDRIAL"/>
    <property type="match status" value="1"/>
</dbReference>
<dbReference type="PANTHER" id="PTHR11538">
    <property type="entry name" value="PHENYLALANYL-TRNA SYNTHETASE"/>
    <property type="match status" value="1"/>
</dbReference>
<dbReference type="Pfam" id="PF02912">
    <property type="entry name" value="Phe_tRNA-synt_N"/>
    <property type="match status" value="1"/>
</dbReference>
<dbReference type="Pfam" id="PF01409">
    <property type="entry name" value="tRNA-synt_2d"/>
    <property type="match status" value="1"/>
</dbReference>
<dbReference type="SUPFAM" id="SSF55681">
    <property type="entry name" value="Class II aaRS and biotin synthetases"/>
    <property type="match status" value="1"/>
</dbReference>
<dbReference type="SUPFAM" id="SSF46589">
    <property type="entry name" value="tRNA-binding arm"/>
    <property type="match status" value="1"/>
</dbReference>
<dbReference type="PROSITE" id="PS50862">
    <property type="entry name" value="AA_TRNA_LIGASE_II"/>
    <property type="match status" value="1"/>
</dbReference>
<feature type="chain" id="PRO_1000078837" description="Phenylalanine--tRNA ligase alpha subunit">
    <location>
        <begin position="1"/>
        <end position="327"/>
    </location>
</feature>
<feature type="binding site" evidence="1">
    <location>
        <position position="252"/>
    </location>
    <ligand>
        <name>Mg(2+)</name>
        <dbReference type="ChEBI" id="CHEBI:18420"/>
        <note>shared with beta subunit</note>
    </ligand>
</feature>
<reference key="1">
    <citation type="submission" date="2008-02" db="EMBL/GenBank/DDBJ databases">
        <title>Complete sequence of Escherichia coli C str. ATCC 8739.</title>
        <authorList>
            <person name="Copeland A."/>
            <person name="Lucas S."/>
            <person name="Lapidus A."/>
            <person name="Glavina del Rio T."/>
            <person name="Dalin E."/>
            <person name="Tice H."/>
            <person name="Bruce D."/>
            <person name="Goodwin L."/>
            <person name="Pitluck S."/>
            <person name="Kiss H."/>
            <person name="Brettin T."/>
            <person name="Detter J.C."/>
            <person name="Han C."/>
            <person name="Kuske C.R."/>
            <person name="Schmutz J."/>
            <person name="Larimer F."/>
            <person name="Land M."/>
            <person name="Hauser L."/>
            <person name="Kyrpides N."/>
            <person name="Mikhailova N."/>
            <person name="Ingram L."/>
            <person name="Richardson P."/>
        </authorList>
    </citation>
    <scope>NUCLEOTIDE SEQUENCE [LARGE SCALE GENOMIC DNA]</scope>
    <source>
        <strain>ATCC 8739 / DSM 1576 / NBRC 3972 / NCIMB 8545 / WDCM 00012 / Crooks</strain>
    </source>
</reference>
<name>SYFA_ECOLC</name>
<gene>
    <name evidence="1" type="primary">pheS</name>
    <name type="ordered locus">EcolC_1917</name>
</gene>
<comment type="catalytic activity">
    <reaction evidence="1">
        <text>tRNA(Phe) + L-phenylalanine + ATP = L-phenylalanyl-tRNA(Phe) + AMP + diphosphate + H(+)</text>
        <dbReference type="Rhea" id="RHEA:19413"/>
        <dbReference type="Rhea" id="RHEA-COMP:9668"/>
        <dbReference type="Rhea" id="RHEA-COMP:9699"/>
        <dbReference type="ChEBI" id="CHEBI:15378"/>
        <dbReference type="ChEBI" id="CHEBI:30616"/>
        <dbReference type="ChEBI" id="CHEBI:33019"/>
        <dbReference type="ChEBI" id="CHEBI:58095"/>
        <dbReference type="ChEBI" id="CHEBI:78442"/>
        <dbReference type="ChEBI" id="CHEBI:78531"/>
        <dbReference type="ChEBI" id="CHEBI:456215"/>
        <dbReference type="EC" id="6.1.1.20"/>
    </reaction>
</comment>
<comment type="cofactor">
    <cofactor evidence="1">
        <name>Mg(2+)</name>
        <dbReference type="ChEBI" id="CHEBI:18420"/>
    </cofactor>
    <text evidence="1">Binds 2 magnesium ions per tetramer.</text>
</comment>
<comment type="subunit">
    <text evidence="1">Tetramer of two alpha and two beta subunits.</text>
</comment>
<comment type="subcellular location">
    <subcellularLocation>
        <location evidence="1">Cytoplasm</location>
    </subcellularLocation>
</comment>
<comment type="similarity">
    <text evidence="1">Belongs to the class-II aminoacyl-tRNA synthetase family. Phe-tRNA synthetase alpha subunit type 1 subfamily.</text>
</comment>
<organism>
    <name type="scientific">Escherichia coli (strain ATCC 8739 / DSM 1576 / NBRC 3972 / NCIMB 8545 / WDCM 00012 / Crooks)</name>
    <dbReference type="NCBI Taxonomy" id="481805"/>
    <lineage>
        <taxon>Bacteria</taxon>
        <taxon>Pseudomonadati</taxon>
        <taxon>Pseudomonadota</taxon>
        <taxon>Gammaproteobacteria</taxon>
        <taxon>Enterobacterales</taxon>
        <taxon>Enterobacteriaceae</taxon>
        <taxon>Escherichia</taxon>
    </lineage>
</organism>
<keyword id="KW-0030">Aminoacyl-tRNA synthetase</keyword>
<keyword id="KW-0067">ATP-binding</keyword>
<keyword id="KW-0963">Cytoplasm</keyword>
<keyword id="KW-0436">Ligase</keyword>
<keyword id="KW-0460">Magnesium</keyword>
<keyword id="KW-0479">Metal-binding</keyword>
<keyword id="KW-0547">Nucleotide-binding</keyword>
<keyword id="KW-0648">Protein biosynthesis</keyword>